<organism>
    <name type="scientific">Acanthamoeba polyphaga mimivirus</name>
    <name type="common">APMV</name>
    <dbReference type="NCBI Taxonomy" id="212035"/>
    <lineage>
        <taxon>Viruses</taxon>
        <taxon>Varidnaviria</taxon>
        <taxon>Bamfordvirae</taxon>
        <taxon>Nucleocytoviricota</taxon>
        <taxon>Megaviricetes</taxon>
        <taxon>Imitervirales</taxon>
        <taxon>Mimiviridae</taxon>
        <taxon>Megamimivirinae</taxon>
        <taxon>Mimivirus</taxon>
        <taxon>Mimivirus bradfordmassiliense</taxon>
    </lineage>
</organism>
<organismHost>
    <name type="scientific">Acanthamoeba polyphaga</name>
    <name type="common">Amoeba</name>
    <dbReference type="NCBI Taxonomy" id="5757"/>
</organismHost>
<sequence length="2156" mass="253104">MAGGILQLVCNATAAENMWINNDPEITFFKKLFRRHTPFASEYIPLYFKSNLDFGQSSSATILSNGDLVHKIFFVCDIPSISAEFINSKNEDVIKTIKNLNSQYIDNDFMRKLNNCINGTIIEYDNICNIIDENIQYYDYYKPIIISIINTLSKYQNKDVLINYQQKIFGKLLNKSNDNLSQNESFQNDSFKLEILDSFFSTNVKYNLVFELIKLIDLEQQFYSQKIPIIPIQNTGKYLANNFVNSVLPAVNNLGNNFGKDFYHRLNTHNAIIGAIESLSISVPTVIIKPFVLNDCYDIYRPNNQNVYFDSTYYSSIIDPNFKLNFMLKSNQVEKYIQSNEFIPIDIIGTNDFIYPEIDNNYNLLFNTQANIMFDNIQSFTDLLFEHYRNLLFDSTENLFFNKSPTPSNIYSYILPTKAYDTKSNNLSDEKINDGPNVFNLNIWFFYFFKYLDQFDVDKFIVYVKDNVHKNLSNACYSFLRNMMVLLKINVDYYMHEISYYMNDMCSKSPSHDLSDTLKNYVPNISESTNQFNKQSGSNLLMVTLIFHRNIIPSIEDMFNFIYEFIENINCNDIENYLEVEIGFVDRETLTELKSTAKQLYQGFYNYFMNKYNKMHFEAEYHCEEINPLVQEYVNHFLTGTSIHDKFYQKRNLNDIIHQLEFYFISETIHIRELQKFYYNIFSNNNLIKNYVDDYGCELIDYFNSVLKTDLEQKYYKVNNIHRYNGESYKMTPYNTRFYGLNDNLPLVYPFDHPPVNPYGVNPDYYSHYRSVTDYVTIPTSNNQILCTEIPINLNNTEPINNRYNDSEYQRFEIDYFRLKHEIFHGTIDNPISDLYKIFISEYDFNVLKLYHLLQQLLDQSNTKPMLSDDLLYKLYITTIYLMNYINEDAGNDTVMSKSIMHQFLEMIEDYLNNQTENISENTINEMVELSDILLKNNQHNYTTDDLIKCNQYINLIKNTDKYDNGIIDRLQIIKYNFLSQYFIYSLESQNISMLKNLDNKFFFKNTGQIINEILQLVDNNPVLDDLSNMEYLYSGEFETEHNHLLCTDSSNLSRYFMNTFNIFTAHELNPIKKLSVRDIYDIIDTTFMSVREIYNICMNNGSINNILVKLDKYQDKLLNKLVLTNKIGQYFYDFLQNKPIEQQNKKDLIKIIDSFGIDLENYMCNKIIPLYNQLVLNNNKNSTIIILAIISKDLDSFFLPNSSASSFKQVIIEDLTNGNKEDPLYLYLKLIGNEYYSYLKFFLDYCCENDLDYDSITNPLESLDITVLKNDNNTNRILSVKDCLNYFMDYLWDHSYPSMKQFGFNEKISDVINKYSSNKSNKSNKSNESDKSSESDKSSESSNHDDKISKIINLLSGSFDTNGFVLNRYLEEFTKNDEISEIQNLSEKSNIIYGLNLYLGKLLILLEQQYNSGLEIKNKISNILYRNKKACTAWIKKLAHYLVDEISISTNSETIDSHKSDWFEIYSQTNLSESRIDGYYKMIGNIDELTIFSNNDKSSRTIILPLCFYFNRNIALSLPLNASINLTYTINIKLKELSDVLFKEEFSEYIDNTGSIVKPKLSNVHLMCEYIYLSNEERQAFVTKHLQYLVDEFQYSTTNITDNNLTPVYKIGTNKISCVVKKNGKKTTETYFNKGIYVDQNNVNVDDNELILRKDLEVKPSKNKSGISSTMIQHTIIDTDPKIHFKRVSIENHFSNPTKMMAILIRPDLHIITDKRDYSSDYFFGEKQWSNYGVHSWYDFSQVRKIREDYYTKFRQKINNLEDPVYGFLNIINHTIENMKIPEIPDKLIKYCEQIKSMYIKHSDEIFDQSNIQKIRDNLHILKINFDITDKQLLLQMIYDICYNMDVSLPTNSIIIDEFRRLDSNFTLDDDNLYVNYEFFKDCICSILKLSILQGRSDELYQLIQQIYDKHNENQINLLINKLSEIIPISNHTYSFTNIMYKAKNLCLLHKCDNHIVNLINQIQDKIDFMNSSELSCVNNMKTVSSTYKDIINQIIVNTNYLDHIPSYIIDTISNKMLETLNIIIDKQYIKIIPYNKLIKPNPKINPLISGHLTFNNISTMPENSDHTFWTACQTYQHFKHDTETGINLYSWAIKPFNEQNSGSANLSRIDRFMSILNIHPIISSKNSASIITMTLSINIINYLSGLCGKAWEKY</sequence>
<protein>
    <recommendedName>
        <fullName>Probable capsid protein 3</fullName>
    </recommendedName>
</protein>
<feature type="chain" id="PRO_0000071170" description="Probable capsid protein 3">
    <location>
        <begin position="1"/>
        <end position="2156"/>
    </location>
</feature>
<feature type="region of interest" description="Disordered" evidence="1">
    <location>
        <begin position="1319"/>
        <end position="1345"/>
    </location>
</feature>
<feature type="compositionally biased region" description="Basic and acidic residues" evidence="1">
    <location>
        <begin position="1326"/>
        <end position="1345"/>
    </location>
</feature>
<comment type="subcellular location">
    <subcellularLocation>
        <location evidence="2">Virion</location>
    </subcellularLocation>
</comment>
<comment type="similarity">
    <text evidence="2">Belongs to the NCLDV major capsid protein family.</text>
</comment>
<gene>
    <name type="ordered locus">MIMI_R440</name>
</gene>
<accession>Q5UQN7</accession>
<dbReference type="EMBL" id="AY653733">
    <property type="protein sequence ID" value="AAV50707.1"/>
    <property type="molecule type" value="Genomic_DNA"/>
</dbReference>
<dbReference type="KEGG" id="vg:9925064"/>
<dbReference type="Proteomes" id="UP000001134">
    <property type="component" value="Genome"/>
</dbReference>
<dbReference type="GO" id="GO:0019028">
    <property type="term" value="C:viral capsid"/>
    <property type="evidence" value="ECO:0007669"/>
    <property type="project" value="UniProtKB-KW"/>
</dbReference>
<dbReference type="GO" id="GO:0005198">
    <property type="term" value="F:structural molecule activity"/>
    <property type="evidence" value="ECO:0007669"/>
    <property type="project" value="InterPro"/>
</dbReference>
<dbReference type="Gene3D" id="2.70.9.10">
    <property type="entry name" value="Adenovirus Type 2 Hexon, domain 4"/>
    <property type="match status" value="2"/>
</dbReference>
<dbReference type="InterPro" id="IPR031654">
    <property type="entry name" value="Capsid_N"/>
</dbReference>
<dbReference type="InterPro" id="IPR007542">
    <property type="entry name" value="MCP_C"/>
</dbReference>
<dbReference type="InterPro" id="IPR016112">
    <property type="entry name" value="VP_dsDNA_II"/>
</dbReference>
<dbReference type="Pfam" id="PF16903">
    <property type="entry name" value="Capsid_N"/>
    <property type="match status" value="2"/>
</dbReference>
<dbReference type="Pfam" id="PF04451">
    <property type="entry name" value="Capsid_NCLDV"/>
    <property type="match status" value="1"/>
</dbReference>
<dbReference type="SUPFAM" id="SSF49749">
    <property type="entry name" value="Group II dsDNA viruses VP"/>
    <property type="match status" value="3"/>
</dbReference>
<proteinExistence type="inferred from homology"/>
<name>CAPS3_MIMIV</name>
<reference key="1">
    <citation type="journal article" date="2004" name="Science">
        <title>The 1.2-megabase genome sequence of Mimivirus.</title>
        <authorList>
            <person name="Raoult D."/>
            <person name="Audic S."/>
            <person name="Robert C."/>
            <person name="Abergel C."/>
            <person name="Renesto P."/>
            <person name="Ogata H."/>
            <person name="La Scola B."/>
            <person name="Susan M."/>
            <person name="Claverie J.-M."/>
        </authorList>
    </citation>
    <scope>NUCLEOTIDE SEQUENCE [LARGE SCALE GENOMIC DNA]</scope>
    <source>
        <strain>Rowbotham-Bradford</strain>
    </source>
</reference>
<evidence type="ECO:0000256" key="1">
    <source>
        <dbReference type="SAM" id="MobiDB-lite"/>
    </source>
</evidence>
<evidence type="ECO:0000305" key="2"/>
<keyword id="KW-0167">Capsid protein</keyword>
<keyword id="KW-1185">Reference proteome</keyword>
<keyword id="KW-0946">Virion</keyword>